<evidence type="ECO:0000255" key="1">
    <source>
        <dbReference type="HAMAP-Rule" id="MF_01077"/>
    </source>
</evidence>
<comment type="function">
    <text evidence="1">Required for maturation of 30S ribosomal subunits.</text>
</comment>
<comment type="subcellular location">
    <subcellularLocation>
        <location evidence="1">Cytoplasm</location>
    </subcellularLocation>
</comment>
<comment type="similarity">
    <text evidence="1">Belongs to the RimP family.</text>
</comment>
<feature type="chain" id="PRO_0000181953" description="Ribosome maturation factor RimP">
    <location>
        <begin position="1"/>
        <end position="142"/>
    </location>
</feature>
<name>RIMP_WOLSU</name>
<proteinExistence type="inferred from homology"/>
<dbReference type="EMBL" id="BX571662">
    <property type="protein sequence ID" value="CAE11020.1"/>
    <property type="molecule type" value="Genomic_DNA"/>
</dbReference>
<dbReference type="RefSeq" id="WP_011139802.1">
    <property type="nucleotide sequence ID" value="NC_005090.1"/>
</dbReference>
<dbReference type="SMR" id="Q7MQU0"/>
<dbReference type="STRING" id="273121.WS2018"/>
<dbReference type="KEGG" id="wsu:WS2018"/>
<dbReference type="eggNOG" id="COG0779">
    <property type="taxonomic scope" value="Bacteria"/>
</dbReference>
<dbReference type="HOGENOM" id="CLU_070525_2_2_7"/>
<dbReference type="Proteomes" id="UP000000422">
    <property type="component" value="Chromosome"/>
</dbReference>
<dbReference type="GO" id="GO:0005829">
    <property type="term" value="C:cytosol"/>
    <property type="evidence" value="ECO:0007669"/>
    <property type="project" value="TreeGrafter"/>
</dbReference>
<dbReference type="GO" id="GO:0000028">
    <property type="term" value="P:ribosomal small subunit assembly"/>
    <property type="evidence" value="ECO:0007669"/>
    <property type="project" value="TreeGrafter"/>
</dbReference>
<dbReference type="GO" id="GO:0006412">
    <property type="term" value="P:translation"/>
    <property type="evidence" value="ECO:0007669"/>
    <property type="project" value="TreeGrafter"/>
</dbReference>
<dbReference type="CDD" id="cd01734">
    <property type="entry name" value="YlxS_C"/>
    <property type="match status" value="1"/>
</dbReference>
<dbReference type="FunFam" id="3.30.300.70:FF:000001">
    <property type="entry name" value="Ribosome maturation factor RimP"/>
    <property type="match status" value="1"/>
</dbReference>
<dbReference type="Gene3D" id="3.30.300.70">
    <property type="entry name" value="RimP-like superfamily, N-terminal"/>
    <property type="match status" value="1"/>
</dbReference>
<dbReference type="HAMAP" id="MF_01077">
    <property type="entry name" value="RimP"/>
    <property type="match status" value="1"/>
</dbReference>
<dbReference type="InterPro" id="IPR003728">
    <property type="entry name" value="Ribosome_maturation_RimP"/>
</dbReference>
<dbReference type="InterPro" id="IPR028998">
    <property type="entry name" value="RimP_C"/>
</dbReference>
<dbReference type="InterPro" id="IPR036847">
    <property type="entry name" value="RimP_C_sf"/>
</dbReference>
<dbReference type="InterPro" id="IPR028989">
    <property type="entry name" value="RimP_N"/>
</dbReference>
<dbReference type="InterPro" id="IPR035956">
    <property type="entry name" value="RimP_N_sf"/>
</dbReference>
<dbReference type="PANTHER" id="PTHR33867">
    <property type="entry name" value="RIBOSOME MATURATION FACTOR RIMP"/>
    <property type="match status" value="1"/>
</dbReference>
<dbReference type="PANTHER" id="PTHR33867:SF1">
    <property type="entry name" value="RIBOSOME MATURATION FACTOR RIMP"/>
    <property type="match status" value="1"/>
</dbReference>
<dbReference type="Pfam" id="PF17384">
    <property type="entry name" value="DUF150_C"/>
    <property type="match status" value="1"/>
</dbReference>
<dbReference type="Pfam" id="PF02576">
    <property type="entry name" value="RimP_N"/>
    <property type="match status" value="1"/>
</dbReference>
<dbReference type="SUPFAM" id="SSF74942">
    <property type="entry name" value="YhbC-like, C-terminal domain"/>
    <property type="match status" value="1"/>
</dbReference>
<dbReference type="SUPFAM" id="SSF75420">
    <property type="entry name" value="YhbC-like, N-terminal domain"/>
    <property type="match status" value="1"/>
</dbReference>
<reference key="1">
    <citation type="journal article" date="2003" name="Proc. Natl. Acad. Sci. U.S.A.">
        <title>Complete genome sequence and analysis of Wolinella succinogenes.</title>
        <authorList>
            <person name="Baar C."/>
            <person name="Eppinger M."/>
            <person name="Raddatz G."/>
            <person name="Simon J."/>
            <person name="Lanz C."/>
            <person name="Klimmek O."/>
            <person name="Nandakumar R."/>
            <person name="Gross R."/>
            <person name="Rosinus A."/>
            <person name="Keller H."/>
            <person name="Jagtap P."/>
            <person name="Linke B."/>
            <person name="Meyer F."/>
            <person name="Lederer H."/>
            <person name="Schuster S.C."/>
        </authorList>
    </citation>
    <scope>NUCLEOTIDE SEQUENCE [LARGE SCALE GENOMIC DNA]</scope>
    <source>
        <strain>ATCC 29543 / DSM 1740 / CCUG 13145 / JCM 31913 / LMG 7466 / NCTC 11488 / FDC 602W</strain>
    </source>
</reference>
<keyword id="KW-0963">Cytoplasm</keyword>
<keyword id="KW-1185">Reference proteome</keyword>
<keyword id="KW-0690">Ribosome biogenesis</keyword>
<protein>
    <recommendedName>
        <fullName evidence="1">Ribosome maturation factor RimP</fullName>
    </recommendedName>
</protein>
<gene>
    <name evidence="1" type="primary">rimP</name>
    <name type="ordered locus">WS2018</name>
</gene>
<sequence length="142" mass="16065">MIGHSTQEKIEKLVQSCGCNLYDLLLLKENERSILRLYITKEVGVSLDDCAMVSDLISPLLDVEDPLAGEYFLEVSSPGIERPLKRPAHYQHALGELARIKFADKNEIEGEIEAADETSVKLKGEEPIPYSLIKKAQTFYRW</sequence>
<organism>
    <name type="scientific">Wolinella succinogenes (strain ATCC 29543 / DSM 1740 / CCUG 13145 / JCM 31913 / LMG 7466 / NCTC 11488 / FDC 602W)</name>
    <name type="common">Vibrio succinogenes</name>
    <dbReference type="NCBI Taxonomy" id="273121"/>
    <lineage>
        <taxon>Bacteria</taxon>
        <taxon>Pseudomonadati</taxon>
        <taxon>Campylobacterota</taxon>
        <taxon>Epsilonproteobacteria</taxon>
        <taxon>Campylobacterales</taxon>
        <taxon>Helicobacteraceae</taxon>
        <taxon>Wolinella</taxon>
    </lineage>
</organism>
<accession>Q7MQU0</accession>